<evidence type="ECO:0000256" key="1">
    <source>
        <dbReference type="SAM" id="MobiDB-lite"/>
    </source>
</evidence>
<evidence type="ECO:0000305" key="2"/>
<keyword id="KW-1185">Reference proteome</keyword>
<name>PPE69_MYCTU</name>
<organism>
    <name type="scientific">Mycobacterium tuberculosis (strain ATCC 25618 / H37Rv)</name>
    <dbReference type="NCBI Taxonomy" id="83332"/>
    <lineage>
        <taxon>Bacteria</taxon>
        <taxon>Bacillati</taxon>
        <taxon>Actinomycetota</taxon>
        <taxon>Actinomycetes</taxon>
        <taxon>Mycobacteriales</taxon>
        <taxon>Mycobacteriaceae</taxon>
        <taxon>Mycobacterium</taxon>
        <taxon>Mycobacterium tuberculosis complex</taxon>
    </lineage>
</organism>
<comment type="similarity">
    <text evidence="2">Belongs to the mycobacterial PPE family.</text>
</comment>
<sequence>MPDPGWAARTPEANDLLLTAGTGVGTHLANQTAWTTLGASHHASGVASAINTAATAASWLGVGSAASALNVTMLNATLHGLAGWVDVKPAVVSTAIAAFETANAAMRPAPECMENRDEWGVDNAINPSVLWTLTPRIVSLDVEYFGVMWPNNAAVGATYGGVLAALAESLAIPPPVATMGASPAAPAQAAAAVGQAAAEAAAGDGMRSAYQGVQAGSTGAGQSTSAGENFGNQLSTFMQPMQAVMQAAPQALQAPSGLMQAPMSAMQPLQSMVGMFANPGALGMGGAAPGASAASAAGGISAAATEVGAGGGGAALGGGGMPATSFTRPVSAFESGTSGRPVGLRPSGALGADVVRAPTTTVGGTPIGGMPVGHAAGGHRGSHGKSEQAATVRVVDDRR</sequence>
<proteinExistence type="inferred from homology"/>
<accession>P9WHW7</accession>
<accession>L0TGX6</accession>
<accession>Q79F90</accession>
<accession>Q7D4N4</accession>
<dbReference type="EMBL" id="AL123456">
    <property type="protein sequence ID" value="CCP46721.1"/>
    <property type="molecule type" value="Genomic_DNA"/>
</dbReference>
<dbReference type="PIR" id="E70598">
    <property type="entry name" value="E70598"/>
</dbReference>
<dbReference type="RefSeq" id="WP_003912362.1">
    <property type="nucleotide sequence ID" value="NZ_NVQJ01000005.1"/>
</dbReference>
<dbReference type="RefSeq" id="YP_178024.1">
    <property type="nucleotide sequence ID" value="NC_000962.3"/>
</dbReference>
<dbReference type="SMR" id="P9WHW7"/>
<dbReference type="STRING" id="83332.Rv3892c"/>
<dbReference type="PaxDb" id="83332-Rv3892c"/>
<dbReference type="DNASU" id="886227"/>
<dbReference type="GeneID" id="886227"/>
<dbReference type="KEGG" id="mtu:Rv3892c"/>
<dbReference type="KEGG" id="mtv:RVBD_3892c"/>
<dbReference type="TubercuList" id="Rv3892c"/>
<dbReference type="eggNOG" id="COG5651">
    <property type="taxonomic scope" value="Bacteria"/>
</dbReference>
<dbReference type="InParanoid" id="P9WHW7"/>
<dbReference type="OrthoDB" id="4721978at2"/>
<dbReference type="Proteomes" id="UP000001584">
    <property type="component" value="Chromosome"/>
</dbReference>
<dbReference type="Gene3D" id="1.20.1260.20">
    <property type="entry name" value="PPE superfamily"/>
    <property type="match status" value="1"/>
</dbReference>
<dbReference type="InterPro" id="IPR000030">
    <property type="entry name" value="PPE_dom"/>
</dbReference>
<dbReference type="InterPro" id="IPR038332">
    <property type="entry name" value="PPE_sf"/>
</dbReference>
<dbReference type="Pfam" id="PF00823">
    <property type="entry name" value="PPE"/>
    <property type="match status" value="1"/>
</dbReference>
<dbReference type="SUPFAM" id="SSF140459">
    <property type="entry name" value="PE/PPE dimer-like"/>
    <property type="match status" value="1"/>
</dbReference>
<gene>
    <name type="primary">PPE69</name>
    <name type="ordered locus">Rv3892c</name>
</gene>
<feature type="chain" id="PRO_0000379594" description="Uncharacterized PPE family protein PPE69">
    <location>
        <begin position="1"/>
        <end position="399"/>
    </location>
</feature>
<feature type="region of interest" description="Disordered" evidence="1">
    <location>
        <begin position="375"/>
        <end position="399"/>
    </location>
</feature>
<reference key="1">
    <citation type="journal article" date="1998" name="Nature">
        <title>Deciphering the biology of Mycobacterium tuberculosis from the complete genome sequence.</title>
        <authorList>
            <person name="Cole S.T."/>
            <person name="Brosch R."/>
            <person name="Parkhill J."/>
            <person name="Garnier T."/>
            <person name="Churcher C.M."/>
            <person name="Harris D.E."/>
            <person name="Gordon S.V."/>
            <person name="Eiglmeier K."/>
            <person name="Gas S."/>
            <person name="Barry C.E. III"/>
            <person name="Tekaia F."/>
            <person name="Badcock K."/>
            <person name="Basham D."/>
            <person name="Brown D."/>
            <person name="Chillingworth T."/>
            <person name="Connor R."/>
            <person name="Davies R.M."/>
            <person name="Devlin K."/>
            <person name="Feltwell T."/>
            <person name="Gentles S."/>
            <person name="Hamlin N."/>
            <person name="Holroyd S."/>
            <person name="Hornsby T."/>
            <person name="Jagels K."/>
            <person name="Krogh A."/>
            <person name="McLean J."/>
            <person name="Moule S."/>
            <person name="Murphy L.D."/>
            <person name="Oliver S."/>
            <person name="Osborne J."/>
            <person name="Quail M.A."/>
            <person name="Rajandream M.A."/>
            <person name="Rogers J."/>
            <person name="Rutter S."/>
            <person name="Seeger K."/>
            <person name="Skelton S."/>
            <person name="Squares S."/>
            <person name="Squares R."/>
            <person name="Sulston J.E."/>
            <person name="Taylor K."/>
            <person name="Whitehead S."/>
            <person name="Barrell B.G."/>
        </authorList>
    </citation>
    <scope>NUCLEOTIDE SEQUENCE [LARGE SCALE GENOMIC DNA]</scope>
    <source>
        <strain>ATCC 25618 / H37Rv</strain>
    </source>
</reference>
<protein>
    <recommendedName>
        <fullName>Uncharacterized PPE family protein PPE69</fullName>
    </recommendedName>
</protein>